<comment type="function">
    <text>Protamines substitute for histones in the chromatin of sperm during the haploid phase of spermatogenesis. They compact sperm DNA into a highly condensed, stable and inactive complex.</text>
</comment>
<comment type="subcellular location">
    <subcellularLocation>
        <location evidence="1">Nucleus</location>
    </subcellularLocation>
    <subcellularLocation>
        <location evidence="1">Chromosome</location>
    </subcellularLocation>
</comment>
<comment type="tissue specificity">
    <text>Testis.</text>
</comment>
<comment type="similarity">
    <text evidence="3">Belongs to the protamine P3 family.</text>
</comment>
<protein>
    <recommendedName>
        <fullName>Protamine-3</fullName>
    </recommendedName>
    <alternativeName>
        <fullName>Sperm protamine P3</fullName>
    </alternativeName>
</protein>
<dbReference type="EMBL" id="Z46939">
    <property type="protein sequence ID" value="CAA87063.1"/>
    <property type="molecule type" value="Genomic_DNA"/>
</dbReference>
<dbReference type="EMBL" id="S79939">
    <property type="protein sequence ID" value="AAB35760.1"/>
    <property type="molecule type" value="mRNA"/>
</dbReference>
<dbReference type="RefSeq" id="NP_001002855.1">
    <property type="nucleotide sequence ID" value="NM_001002855.2"/>
</dbReference>
<dbReference type="STRING" id="10116.ENSRNOP00000003451"/>
<dbReference type="iPTMnet" id="Q64256"/>
<dbReference type="PhosphoSitePlus" id="Q64256"/>
<dbReference type="PaxDb" id="10116-ENSRNOP00000003451"/>
<dbReference type="Ensembl" id="ENSRNOT00000003451.4">
    <property type="protein sequence ID" value="ENSRNOP00000003451.2"/>
    <property type="gene ID" value="ENSRNOG00000002564.4"/>
</dbReference>
<dbReference type="GeneID" id="442921"/>
<dbReference type="KEGG" id="rno:442921"/>
<dbReference type="UCSC" id="RGD:1587265">
    <property type="organism name" value="rat"/>
</dbReference>
<dbReference type="AGR" id="RGD:1587265"/>
<dbReference type="CTD" id="58531"/>
<dbReference type="RGD" id="1587265">
    <property type="gene designation" value="Prm3"/>
</dbReference>
<dbReference type="eggNOG" id="ENOG502T3TU">
    <property type="taxonomic scope" value="Eukaryota"/>
</dbReference>
<dbReference type="GeneTree" id="ENSGT00390000001558"/>
<dbReference type="HOGENOM" id="CLU_2398985_0_0_1"/>
<dbReference type="InParanoid" id="Q64256"/>
<dbReference type="OMA" id="RCAKLNT"/>
<dbReference type="OrthoDB" id="9837884at2759"/>
<dbReference type="PhylomeDB" id="Q64256"/>
<dbReference type="PRO" id="PR:Q64256"/>
<dbReference type="Proteomes" id="UP000002494">
    <property type="component" value="Chromosome 10"/>
</dbReference>
<dbReference type="Bgee" id="ENSRNOG00000002564">
    <property type="expression patterns" value="Expressed in testis and 2 other cell types or tissues"/>
</dbReference>
<dbReference type="GO" id="GO:0005737">
    <property type="term" value="C:cytoplasm"/>
    <property type="evidence" value="ECO:0000266"/>
    <property type="project" value="RGD"/>
</dbReference>
<dbReference type="GO" id="GO:0000786">
    <property type="term" value="C:nucleosome"/>
    <property type="evidence" value="ECO:0007669"/>
    <property type="project" value="UniProtKB-KW"/>
</dbReference>
<dbReference type="GO" id="GO:0005634">
    <property type="term" value="C:nucleus"/>
    <property type="evidence" value="ECO:0007669"/>
    <property type="project" value="UniProtKB-SubCell"/>
</dbReference>
<dbReference type="GO" id="GO:0003677">
    <property type="term" value="F:DNA binding"/>
    <property type="evidence" value="ECO:0007669"/>
    <property type="project" value="UniProtKB-KW"/>
</dbReference>
<dbReference type="GO" id="GO:0030154">
    <property type="term" value="P:cell differentiation"/>
    <property type="evidence" value="ECO:0007669"/>
    <property type="project" value="UniProtKB-KW"/>
</dbReference>
<dbReference type="GO" id="GO:0030261">
    <property type="term" value="P:chromosome condensation"/>
    <property type="evidence" value="ECO:0007669"/>
    <property type="project" value="UniProtKB-KW"/>
</dbReference>
<dbReference type="GO" id="GO:0030317">
    <property type="term" value="P:flagellated sperm motility"/>
    <property type="evidence" value="ECO:0000266"/>
    <property type="project" value="RGD"/>
</dbReference>
<dbReference type="GO" id="GO:0007283">
    <property type="term" value="P:spermatogenesis"/>
    <property type="evidence" value="ECO:0007669"/>
    <property type="project" value="UniProtKB-KW"/>
</dbReference>
<dbReference type="InterPro" id="IPR026077">
    <property type="entry name" value="PRMP3"/>
</dbReference>
<dbReference type="PANTHER" id="PTHR14317:SF0">
    <property type="entry name" value="PROTAMINE-3"/>
    <property type="match status" value="1"/>
</dbReference>
<dbReference type="PANTHER" id="PTHR14317">
    <property type="entry name" value="SPERM PROTAMINE P3"/>
    <property type="match status" value="1"/>
</dbReference>
<proteinExistence type="evidence at protein level"/>
<feature type="chain" id="PRO_0000106639" description="Protamine-3">
    <location>
        <begin position="1"/>
        <end position="104"/>
    </location>
</feature>
<feature type="region of interest" description="Disordered" evidence="2">
    <location>
        <begin position="1"/>
        <end position="104"/>
    </location>
</feature>
<feature type="compositionally biased region" description="Acidic residues" evidence="2">
    <location>
        <begin position="45"/>
        <end position="70"/>
    </location>
</feature>
<feature type="modified residue" description="Phosphoserine" evidence="4">
    <location>
        <position position="96"/>
    </location>
</feature>
<sequence length="104" mass="11450">MGSRCAKLSTGHGPAQNTGHSRGHESSMKKLVACVSQDNFSLSSEGEEEEEDEEDEEEEDDDEEDEEEEQIPVKGKLLLLEPEKQDGAEDAVAQPSPEPKQKHS</sequence>
<evidence type="ECO:0000250" key="1"/>
<evidence type="ECO:0000256" key="2">
    <source>
        <dbReference type="SAM" id="MobiDB-lite"/>
    </source>
</evidence>
<evidence type="ECO:0000305" key="3"/>
<evidence type="ECO:0007744" key="4">
    <source>
    </source>
</evidence>
<keyword id="KW-0158">Chromosome</keyword>
<keyword id="KW-0217">Developmental protein</keyword>
<keyword id="KW-0221">Differentiation</keyword>
<keyword id="KW-0226">DNA condensation</keyword>
<keyword id="KW-0238">DNA-binding</keyword>
<keyword id="KW-0544">Nucleosome core</keyword>
<keyword id="KW-0539">Nucleus</keyword>
<keyword id="KW-0597">Phosphoprotein</keyword>
<keyword id="KW-1185">Reference proteome</keyword>
<keyword id="KW-0744">Spermatogenesis</keyword>
<reference key="1">
    <citation type="journal article" date="1996" name="Mol. Reprod. Dev.">
        <title>Sequence analysis of the conserved protamine gene cluster shows that it contains a fourth expressed gene.</title>
        <authorList>
            <person name="Schlueter G."/>
            <person name="Celik A.B."/>
            <person name="Obata R."/>
            <person name="Schlicker M."/>
            <person name="Hofferbert S."/>
            <person name="Schlung A."/>
            <person name="Adham I.M."/>
            <person name="Engel W."/>
        </authorList>
    </citation>
    <scope>NUCLEOTIDE SEQUENCE [GENOMIC DNA]</scope>
</reference>
<reference key="2">
    <citation type="journal article" date="1995" name="Cytogenet. Cell Genet.">
        <title>The rat Prm3 gene is an intronless member of the protamine gene cluster and is expressed in haploid male germ cells.</title>
        <authorList>
            <person name="Schlueter G."/>
            <person name="Engel W."/>
        </authorList>
    </citation>
    <scope>NUCLEOTIDE SEQUENCE [MRNA]</scope>
</reference>
<reference key="3">
    <citation type="journal article" date="2012" name="Nat. Commun.">
        <title>Quantitative maps of protein phosphorylation sites across 14 different rat organs and tissues.</title>
        <authorList>
            <person name="Lundby A."/>
            <person name="Secher A."/>
            <person name="Lage K."/>
            <person name="Nordsborg N.B."/>
            <person name="Dmytriyev A."/>
            <person name="Lundby C."/>
            <person name="Olsen J.V."/>
        </authorList>
    </citation>
    <scope>PHOSPHORYLATION [LARGE SCALE ANALYSIS] AT SER-96</scope>
    <scope>IDENTIFICATION BY MASS SPECTROMETRY [LARGE SCALE ANALYSIS]</scope>
</reference>
<name>PRM3_RAT</name>
<organism>
    <name type="scientific">Rattus norvegicus</name>
    <name type="common">Rat</name>
    <dbReference type="NCBI Taxonomy" id="10116"/>
    <lineage>
        <taxon>Eukaryota</taxon>
        <taxon>Metazoa</taxon>
        <taxon>Chordata</taxon>
        <taxon>Craniata</taxon>
        <taxon>Vertebrata</taxon>
        <taxon>Euteleostomi</taxon>
        <taxon>Mammalia</taxon>
        <taxon>Eutheria</taxon>
        <taxon>Euarchontoglires</taxon>
        <taxon>Glires</taxon>
        <taxon>Rodentia</taxon>
        <taxon>Myomorpha</taxon>
        <taxon>Muroidea</taxon>
        <taxon>Muridae</taxon>
        <taxon>Murinae</taxon>
        <taxon>Rattus</taxon>
    </lineage>
</organism>
<gene>
    <name type="primary">Prm3</name>
</gene>
<accession>Q64256</accession>